<comment type="function">
    <text evidence="1">Catalyzes the transfer of the phosphoribosyl group of 5-phosphorylribose-1-pyrophosphate (PRPP) to anthranilate to yield N-(5'-phosphoribosyl)-anthranilate (PRA).</text>
</comment>
<comment type="catalytic activity">
    <reaction evidence="1">
        <text>N-(5-phospho-beta-D-ribosyl)anthranilate + diphosphate = 5-phospho-alpha-D-ribose 1-diphosphate + anthranilate</text>
        <dbReference type="Rhea" id="RHEA:11768"/>
        <dbReference type="ChEBI" id="CHEBI:16567"/>
        <dbReference type="ChEBI" id="CHEBI:18277"/>
        <dbReference type="ChEBI" id="CHEBI:33019"/>
        <dbReference type="ChEBI" id="CHEBI:58017"/>
        <dbReference type="EC" id="2.4.2.18"/>
    </reaction>
</comment>
<comment type="cofactor">
    <cofactor evidence="1">
        <name>Mg(2+)</name>
        <dbReference type="ChEBI" id="CHEBI:18420"/>
    </cofactor>
    <text evidence="1">Binds 2 magnesium ions per monomer.</text>
</comment>
<comment type="pathway">
    <text evidence="1">Amino-acid biosynthesis; L-tryptophan biosynthesis; L-tryptophan from chorismate: step 2/5.</text>
</comment>
<comment type="subunit">
    <text evidence="1">Homodimer.</text>
</comment>
<comment type="similarity">
    <text evidence="1">Belongs to the anthranilate phosphoribosyltransferase family.</text>
</comment>
<protein>
    <recommendedName>
        <fullName evidence="1">Anthranilate phosphoribosyltransferase</fullName>
        <ecNumber evidence="1">2.4.2.18</ecNumber>
    </recommendedName>
</protein>
<feature type="chain" id="PRO_0000227173" description="Anthranilate phosphoribosyltransferase">
    <location>
        <begin position="1"/>
        <end position="345"/>
    </location>
</feature>
<feature type="binding site" evidence="1">
    <location>
        <position position="75"/>
    </location>
    <ligand>
        <name>5-phospho-alpha-D-ribose 1-diphosphate</name>
        <dbReference type="ChEBI" id="CHEBI:58017"/>
    </ligand>
</feature>
<feature type="binding site" evidence="1">
    <location>
        <position position="75"/>
    </location>
    <ligand>
        <name>anthranilate</name>
        <dbReference type="ChEBI" id="CHEBI:16567"/>
        <label>1</label>
    </ligand>
</feature>
<feature type="binding site" evidence="1">
    <location>
        <begin position="78"/>
        <end position="79"/>
    </location>
    <ligand>
        <name>5-phospho-alpha-D-ribose 1-diphosphate</name>
        <dbReference type="ChEBI" id="CHEBI:58017"/>
    </ligand>
</feature>
<feature type="binding site" evidence="1">
    <location>
        <position position="83"/>
    </location>
    <ligand>
        <name>5-phospho-alpha-D-ribose 1-diphosphate</name>
        <dbReference type="ChEBI" id="CHEBI:58017"/>
    </ligand>
</feature>
<feature type="binding site" evidence="1">
    <location>
        <begin position="85"/>
        <end position="88"/>
    </location>
    <ligand>
        <name>5-phospho-alpha-D-ribose 1-diphosphate</name>
        <dbReference type="ChEBI" id="CHEBI:58017"/>
    </ligand>
</feature>
<feature type="binding site" evidence="1">
    <location>
        <position position="87"/>
    </location>
    <ligand>
        <name>Mg(2+)</name>
        <dbReference type="ChEBI" id="CHEBI:18420"/>
        <label>1</label>
    </ligand>
</feature>
<feature type="binding site" evidence="1">
    <location>
        <begin position="103"/>
        <end position="111"/>
    </location>
    <ligand>
        <name>5-phospho-alpha-D-ribose 1-diphosphate</name>
        <dbReference type="ChEBI" id="CHEBI:58017"/>
    </ligand>
</feature>
<feature type="binding site" evidence="1">
    <location>
        <position position="106"/>
    </location>
    <ligand>
        <name>anthranilate</name>
        <dbReference type="ChEBI" id="CHEBI:16567"/>
        <label>1</label>
    </ligand>
</feature>
<feature type="binding site" evidence="1">
    <location>
        <position position="115"/>
    </location>
    <ligand>
        <name>5-phospho-alpha-D-ribose 1-diphosphate</name>
        <dbReference type="ChEBI" id="CHEBI:58017"/>
    </ligand>
</feature>
<feature type="binding site" evidence="1">
    <location>
        <position position="161"/>
    </location>
    <ligand>
        <name>anthranilate</name>
        <dbReference type="ChEBI" id="CHEBI:16567"/>
        <label>2</label>
    </ligand>
</feature>
<feature type="binding site" evidence="1">
    <location>
        <position position="219"/>
    </location>
    <ligand>
        <name>Mg(2+)</name>
        <dbReference type="ChEBI" id="CHEBI:18420"/>
        <label>2</label>
    </ligand>
</feature>
<feature type="binding site" evidence="1">
    <location>
        <position position="220"/>
    </location>
    <ligand>
        <name>Mg(2+)</name>
        <dbReference type="ChEBI" id="CHEBI:18420"/>
        <label>1</label>
    </ligand>
</feature>
<feature type="binding site" evidence="1">
    <location>
        <position position="220"/>
    </location>
    <ligand>
        <name>Mg(2+)</name>
        <dbReference type="ChEBI" id="CHEBI:18420"/>
        <label>2</label>
    </ligand>
</feature>
<accession>Q5YZ21</accession>
<evidence type="ECO:0000255" key="1">
    <source>
        <dbReference type="HAMAP-Rule" id="MF_00211"/>
    </source>
</evidence>
<dbReference type="EC" id="2.4.2.18" evidence="1"/>
<dbReference type="EMBL" id="AP006618">
    <property type="protein sequence ID" value="BAD56570.1"/>
    <property type="molecule type" value="Genomic_DNA"/>
</dbReference>
<dbReference type="SMR" id="Q5YZ21"/>
<dbReference type="STRING" id="247156.NFA_17240"/>
<dbReference type="KEGG" id="nfa:NFA_17240"/>
<dbReference type="eggNOG" id="COG0547">
    <property type="taxonomic scope" value="Bacteria"/>
</dbReference>
<dbReference type="HOGENOM" id="CLU_034315_4_1_11"/>
<dbReference type="UniPathway" id="UPA00035">
    <property type="reaction ID" value="UER00041"/>
</dbReference>
<dbReference type="Proteomes" id="UP000006820">
    <property type="component" value="Chromosome"/>
</dbReference>
<dbReference type="GO" id="GO:0005829">
    <property type="term" value="C:cytosol"/>
    <property type="evidence" value="ECO:0007669"/>
    <property type="project" value="TreeGrafter"/>
</dbReference>
<dbReference type="GO" id="GO:0004048">
    <property type="term" value="F:anthranilate phosphoribosyltransferase activity"/>
    <property type="evidence" value="ECO:0007669"/>
    <property type="project" value="UniProtKB-UniRule"/>
</dbReference>
<dbReference type="GO" id="GO:0000287">
    <property type="term" value="F:magnesium ion binding"/>
    <property type="evidence" value="ECO:0007669"/>
    <property type="project" value="UniProtKB-UniRule"/>
</dbReference>
<dbReference type="GO" id="GO:0000162">
    <property type="term" value="P:L-tryptophan biosynthetic process"/>
    <property type="evidence" value="ECO:0007669"/>
    <property type="project" value="UniProtKB-UniRule"/>
</dbReference>
<dbReference type="FunFam" id="3.40.1030.10:FF:000002">
    <property type="entry name" value="Anthranilate phosphoribosyltransferase"/>
    <property type="match status" value="1"/>
</dbReference>
<dbReference type="Gene3D" id="3.40.1030.10">
    <property type="entry name" value="Nucleoside phosphorylase/phosphoribosyltransferase catalytic domain"/>
    <property type="match status" value="1"/>
</dbReference>
<dbReference type="Gene3D" id="1.20.970.10">
    <property type="entry name" value="Transferase, Pyrimidine Nucleoside Phosphorylase, Chain C"/>
    <property type="match status" value="1"/>
</dbReference>
<dbReference type="HAMAP" id="MF_00211">
    <property type="entry name" value="TrpD"/>
    <property type="match status" value="1"/>
</dbReference>
<dbReference type="InterPro" id="IPR005940">
    <property type="entry name" value="Anthranilate_Pribosyl_Tfrase"/>
</dbReference>
<dbReference type="InterPro" id="IPR000312">
    <property type="entry name" value="Glycosyl_Trfase_fam3"/>
</dbReference>
<dbReference type="InterPro" id="IPR017459">
    <property type="entry name" value="Glycosyl_Trfase_fam3_N_dom"/>
</dbReference>
<dbReference type="InterPro" id="IPR036320">
    <property type="entry name" value="Glycosyl_Trfase_fam3_N_dom_sf"/>
</dbReference>
<dbReference type="InterPro" id="IPR035902">
    <property type="entry name" value="Nuc_phospho_transferase"/>
</dbReference>
<dbReference type="NCBIfam" id="TIGR01245">
    <property type="entry name" value="trpD"/>
    <property type="match status" value="1"/>
</dbReference>
<dbReference type="PANTHER" id="PTHR43285">
    <property type="entry name" value="ANTHRANILATE PHOSPHORIBOSYLTRANSFERASE"/>
    <property type="match status" value="1"/>
</dbReference>
<dbReference type="PANTHER" id="PTHR43285:SF2">
    <property type="entry name" value="ANTHRANILATE PHOSPHORIBOSYLTRANSFERASE"/>
    <property type="match status" value="1"/>
</dbReference>
<dbReference type="Pfam" id="PF02885">
    <property type="entry name" value="Glycos_trans_3N"/>
    <property type="match status" value="1"/>
</dbReference>
<dbReference type="Pfam" id="PF00591">
    <property type="entry name" value="Glycos_transf_3"/>
    <property type="match status" value="1"/>
</dbReference>
<dbReference type="SUPFAM" id="SSF52418">
    <property type="entry name" value="Nucleoside phosphorylase/phosphoribosyltransferase catalytic domain"/>
    <property type="match status" value="1"/>
</dbReference>
<dbReference type="SUPFAM" id="SSF47648">
    <property type="entry name" value="Nucleoside phosphorylase/phosphoribosyltransferase N-terminal domain"/>
    <property type="match status" value="1"/>
</dbReference>
<name>TRPD_NOCFA</name>
<keyword id="KW-0028">Amino-acid biosynthesis</keyword>
<keyword id="KW-0057">Aromatic amino acid biosynthesis</keyword>
<keyword id="KW-0328">Glycosyltransferase</keyword>
<keyword id="KW-0460">Magnesium</keyword>
<keyword id="KW-0479">Metal-binding</keyword>
<keyword id="KW-1185">Reference proteome</keyword>
<keyword id="KW-0808">Transferase</keyword>
<keyword id="KW-0822">Tryptophan biosynthesis</keyword>
<organism>
    <name type="scientific">Nocardia farcinica (strain IFM 10152)</name>
    <dbReference type="NCBI Taxonomy" id="247156"/>
    <lineage>
        <taxon>Bacteria</taxon>
        <taxon>Bacillati</taxon>
        <taxon>Actinomycetota</taxon>
        <taxon>Actinomycetes</taxon>
        <taxon>Mycobacteriales</taxon>
        <taxon>Nocardiaceae</taxon>
        <taxon>Nocardia</taxon>
    </lineage>
</organism>
<gene>
    <name evidence="1" type="primary">trpD</name>
    <name type="ordered locus">NFA_17240</name>
</gene>
<sequence>MLGALADGRDLSAADTAWAMNEIMSDNATSAQIAAFGVAIKIKGPTPEELGGLATGMFEHARLVSIDGDAVDIVGTGGDRSGSVNISTMSSIVVAAAGVPVVKHGNRAASSKSGGADVLEALGVRLNLGPEAVARCVREVGIGFCFAPVFHPALRFAGAARREIGIPTVFNILGPLTNPARPRAGLVGCAFPELLEVVAGVFAERGASALVVRGADGLDEITTSDVTDTWVVSGGRMRRTTIDPTRLGIARVDLDALRGGDAEVNAGVARSVFAGTAGAVRDAVLVNSAAAIVAYDLSRGVGDPDADVHDALAAGMARAAAAIDGGQAAALLERWAKLSNTLGDR</sequence>
<proteinExistence type="inferred from homology"/>
<reference key="1">
    <citation type="journal article" date="2004" name="Proc. Natl. Acad. Sci. U.S.A.">
        <title>The complete genomic sequence of Nocardia farcinica IFM 10152.</title>
        <authorList>
            <person name="Ishikawa J."/>
            <person name="Yamashita A."/>
            <person name="Mikami Y."/>
            <person name="Hoshino Y."/>
            <person name="Kurita H."/>
            <person name="Hotta K."/>
            <person name="Shiba T."/>
            <person name="Hattori M."/>
        </authorList>
    </citation>
    <scope>NUCLEOTIDE SEQUENCE [LARGE SCALE GENOMIC DNA]</scope>
    <source>
        <strain>IFM 10152</strain>
    </source>
</reference>